<dbReference type="EC" id="2.3.1.257" evidence="5 6"/>
<dbReference type="EMBL" id="AK023910">
    <property type="protein sequence ID" value="BAB14720.1"/>
    <property type="molecule type" value="mRNA"/>
</dbReference>
<dbReference type="EMBL" id="AK299041">
    <property type="protein sequence ID" value="BAG61115.1"/>
    <property type="molecule type" value="mRNA"/>
</dbReference>
<dbReference type="EMBL" id="AK300451">
    <property type="protein sequence ID" value="BAG62172.1"/>
    <property type="molecule type" value="mRNA"/>
</dbReference>
<dbReference type="EMBL" id="BX647309">
    <property type="protein sequence ID" value="CAI46006.1"/>
    <property type="status" value="ALT_SEQ"/>
    <property type="molecule type" value="Transcribed_RNA"/>
</dbReference>
<dbReference type="EMBL" id="AP003780">
    <property type="status" value="NOT_ANNOTATED_CDS"/>
    <property type="molecule type" value="Genomic_DNA"/>
</dbReference>
<dbReference type="EMBL" id="BC041617">
    <property type="protein sequence ID" value="AAH41617.1"/>
    <property type="molecule type" value="mRNA"/>
</dbReference>
<dbReference type="EMBL" id="BC052298">
    <property type="protein sequence ID" value="AAH52298.1"/>
    <property type="molecule type" value="mRNA"/>
</dbReference>
<dbReference type="CCDS" id="CCDS73311.1">
    <molecule id="Q86UY6-3"/>
</dbReference>
<dbReference type="CCDS" id="CCDS8053.1">
    <molecule id="Q86UY6-1"/>
</dbReference>
<dbReference type="RefSeq" id="NP_001287729.1">
    <molecule id="Q86UY6-3"/>
    <property type="nucleotide sequence ID" value="NM_001300800.1"/>
</dbReference>
<dbReference type="RefSeq" id="NP_079047.2">
    <molecule id="Q86UY6-1"/>
    <property type="nucleotide sequence ID" value="NM_024771.4"/>
</dbReference>
<dbReference type="PDB" id="4U9V">
    <property type="method" value="X-ray"/>
    <property type="resolution" value="1.78 A"/>
    <property type="chains" value="B=25-220"/>
</dbReference>
<dbReference type="PDB" id="4U9W">
    <property type="method" value="X-ray"/>
    <property type="resolution" value="2.49 A"/>
    <property type="chains" value="A/B/C/D=17-220"/>
</dbReference>
<dbReference type="PDB" id="7KD7">
    <property type="method" value="X-ray"/>
    <property type="resolution" value="1.44 A"/>
    <property type="chains" value="A/D=17-220"/>
</dbReference>
<dbReference type="PDB" id="7KPU">
    <property type="method" value="X-ray"/>
    <property type="resolution" value="1.43 A"/>
    <property type="chains" value="A/D=17-220"/>
</dbReference>
<dbReference type="PDBsum" id="4U9V"/>
<dbReference type="PDBsum" id="4U9W"/>
<dbReference type="PDBsum" id="7KD7"/>
<dbReference type="PDBsum" id="7KPU"/>
<dbReference type="SMR" id="Q86UY6"/>
<dbReference type="BioGRID" id="122921">
    <property type="interactions" value="979"/>
</dbReference>
<dbReference type="DIP" id="DIP-61383N"/>
<dbReference type="FunCoup" id="Q86UY6">
    <property type="interactions" value="3527"/>
</dbReference>
<dbReference type="IntAct" id="Q86UY6">
    <property type="interactions" value="33"/>
</dbReference>
<dbReference type="STRING" id="9606.ENSP00000367024"/>
<dbReference type="BindingDB" id="Q86UY6"/>
<dbReference type="ChEMBL" id="CHEMBL4523373"/>
<dbReference type="GlyGen" id="Q86UY6">
    <property type="glycosylation" value="1 site, 1 N-linked glycan (1 site)"/>
</dbReference>
<dbReference type="iPTMnet" id="Q86UY6"/>
<dbReference type="PhosphoSitePlus" id="Q86UY6"/>
<dbReference type="SwissPalm" id="Q86UY6"/>
<dbReference type="BioMuta" id="NAA40"/>
<dbReference type="DMDM" id="74727506"/>
<dbReference type="jPOST" id="Q86UY6"/>
<dbReference type="MassIVE" id="Q86UY6"/>
<dbReference type="PaxDb" id="9606-ENSP00000367024"/>
<dbReference type="PeptideAtlas" id="Q86UY6"/>
<dbReference type="ProteomicsDB" id="4913"/>
<dbReference type="ProteomicsDB" id="5140"/>
<dbReference type="ProteomicsDB" id="69938">
    <molecule id="Q86UY6-1"/>
</dbReference>
<dbReference type="Pumba" id="Q86UY6"/>
<dbReference type="Antibodypedia" id="43913">
    <property type="antibodies" value="73 antibodies from 23 providers"/>
</dbReference>
<dbReference type="DNASU" id="79829"/>
<dbReference type="Ensembl" id="ENST00000377793.9">
    <molecule id="Q86UY6-1"/>
    <property type="protein sequence ID" value="ENSP00000367024.4"/>
    <property type="gene ID" value="ENSG00000110583.13"/>
</dbReference>
<dbReference type="Ensembl" id="ENST00000542163.1">
    <molecule id="Q86UY6-3"/>
    <property type="protein sequence ID" value="ENSP00000442055.1"/>
    <property type="gene ID" value="ENSG00000110583.13"/>
</dbReference>
<dbReference type="GeneID" id="79829"/>
<dbReference type="KEGG" id="hsa:79829"/>
<dbReference type="MANE-Select" id="ENST00000377793.9">
    <property type="protein sequence ID" value="ENSP00000367024.4"/>
    <property type="RefSeq nucleotide sequence ID" value="NM_024771.4"/>
    <property type="RefSeq protein sequence ID" value="NP_079047.2"/>
</dbReference>
<dbReference type="UCSC" id="uc009yoz.4">
    <molecule id="Q86UY6-1"/>
    <property type="organism name" value="human"/>
</dbReference>
<dbReference type="AGR" id="HGNC:25845"/>
<dbReference type="CTD" id="79829"/>
<dbReference type="DisGeNET" id="79829"/>
<dbReference type="GeneCards" id="NAA40"/>
<dbReference type="HGNC" id="HGNC:25845">
    <property type="gene designation" value="NAA40"/>
</dbReference>
<dbReference type="HPA" id="ENSG00000110583">
    <property type="expression patterns" value="Low tissue specificity"/>
</dbReference>
<dbReference type="MIM" id="619999">
    <property type="type" value="gene"/>
</dbReference>
<dbReference type="neXtProt" id="NX_Q86UY6"/>
<dbReference type="OpenTargets" id="ENSG00000110583"/>
<dbReference type="PharmGKB" id="PA165543497"/>
<dbReference type="VEuPathDB" id="HostDB:ENSG00000110583"/>
<dbReference type="eggNOG" id="KOG2488">
    <property type="taxonomic scope" value="Eukaryota"/>
</dbReference>
<dbReference type="GeneTree" id="ENSGT00390000014903"/>
<dbReference type="HOGENOM" id="CLU_051699_4_0_1"/>
<dbReference type="InParanoid" id="Q86UY6"/>
<dbReference type="OMA" id="AYLHYRF"/>
<dbReference type="OrthoDB" id="424551at2759"/>
<dbReference type="PAN-GO" id="Q86UY6">
    <property type="GO annotations" value="6 GO annotations based on evolutionary models"/>
</dbReference>
<dbReference type="PhylomeDB" id="Q86UY6"/>
<dbReference type="TreeFam" id="TF315129"/>
<dbReference type="BioCyc" id="MetaCyc:ENSG00000110583-MONOMER"/>
<dbReference type="BRENDA" id="2.3.1.257">
    <property type="organism ID" value="2681"/>
</dbReference>
<dbReference type="PathwayCommons" id="Q86UY6"/>
<dbReference type="SignaLink" id="Q86UY6"/>
<dbReference type="BioGRID-ORCS" id="79829">
    <property type="hits" value="77 hits in 1159 CRISPR screens"/>
</dbReference>
<dbReference type="ChiTaRS" id="NAA40">
    <property type="organism name" value="human"/>
</dbReference>
<dbReference type="EvolutionaryTrace" id="Q86UY6"/>
<dbReference type="GenomeRNAi" id="79829"/>
<dbReference type="Pharos" id="Q86UY6">
    <property type="development level" value="Tbio"/>
</dbReference>
<dbReference type="PRO" id="PR:Q86UY6"/>
<dbReference type="Proteomes" id="UP000005640">
    <property type="component" value="Chromosome 11"/>
</dbReference>
<dbReference type="RNAct" id="Q86UY6">
    <property type="molecule type" value="protein"/>
</dbReference>
<dbReference type="Bgee" id="ENSG00000110583">
    <property type="expression patterns" value="Expressed in buccal mucosa cell and 171 other cell types or tissues"/>
</dbReference>
<dbReference type="ExpressionAtlas" id="Q86UY6">
    <property type="expression patterns" value="baseline and differential"/>
</dbReference>
<dbReference type="GO" id="GO:0034451">
    <property type="term" value="C:centriolar satellite"/>
    <property type="evidence" value="ECO:0000314"/>
    <property type="project" value="HPA"/>
</dbReference>
<dbReference type="GO" id="GO:0005829">
    <property type="term" value="C:cytosol"/>
    <property type="evidence" value="ECO:0000314"/>
    <property type="project" value="HPA"/>
</dbReference>
<dbReference type="GO" id="GO:0005654">
    <property type="term" value="C:nucleoplasm"/>
    <property type="evidence" value="ECO:0000314"/>
    <property type="project" value="HPA"/>
</dbReference>
<dbReference type="GO" id="GO:0005634">
    <property type="term" value="C:nucleus"/>
    <property type="evidence" value="ECO:0000318"/>
    <property type="project" value="GO_Central"/>
</dbReference>
<dbReference type="GO" id="GO:0043998">
    <property type="term" value="F:histone H2A acetyltransferase activity"/>
    <property type="evidence" value="ECO:0000314"/>
    <property type="project" value="UniProtKB"/>
</dbReference>
<dbReference type="GO" id="GO:0010485">
    <property type="term" value="F:histone H4 acetyltransferase activity"/>
    <property type="evidence" value="ECO:0000314"/>
    <property type="project" value="UniProtKB"/>
</dbReference>
<dbReference type="GO" id="GO:1990189">
    <property type="term" value="F:protein N-terminal-serine acetyltransferase activity"/>
    <property type="evidence" value="ECO:0000314"/>
    <property type="project" value="UniProtKB"/>
</dbReference>
<dbReference type="GO" id="GO:0006629">
    <property type="term" value="P:lipid metabolic process"/>
    <property type="evidence" value="ECO:0007669"/>
    <property type="project" value="Ensembl"/>
</dbReference>
<dbReference type="FunFam" id="3.40.630.30:FF:000033">
    <property type="entry name" value="N-alpha-acetyltransferase 40 isoform X1"/>
    <property type="match status" value="1"/>
</dbReference>
<dbReference type="Gene3D" id="3.40.630.30">
    <property type="match status" value="1"/>
</dbReference>
<dbReference type="InterPro" id="IPR016181">
    <property type="entry name" value="Acyl_CoA_acyltransferase"/>
</dbReference>
<dbReference type="InterPro" id="IPR000182">
    <property type="entry name" value="GNAT_dom"/>
</dbReference>
<dbReference type="InterPro" id="IPR039949">
    <property type="entry name" value="NAA40"/>
</dbReference>
<dbReference type="PANTHER" id="PTHR20531">
    <property type="entry name" value="N-ALPHA-ACETYLTRANSFERASE 40"/>
    <property type="match status" value="1"/>
</dbReference>
<dbReference type="PANTHER" id="PTHR20531:SF1">
    <property type="entry name" value="N-ALPHA-ACETYLTRANSFERASE 40"/>
    <property type="match status" value="1"/>
</dbReference>
<dbReference type="Pfam" id="PF00583">
    <property type="entry name" value="Acetyltransf_1"/>
    <property type="match status" value="1"/>
</dbReference>
<dbReference type="SUPFAM" id="SSF55729">
    <property type="entry name" value="Acyl-CoA N-acyltransferases (Nat)"/>
    <property type="match status" value="1"/>
</dbReference>
<dbReference type="PROSITE" id="PS51186">
    <property type="entry name" value="GNAT"/>
    <property type="match status" value="1"/>
</dbReference>
<evidence type="ECO:0000250" key="1">
    <source>
        <dbReference type="UniProtKB" id="Q8VE10"/>
    </source>
</evidence>
<evidence type="ECO:0000255" key="2"/>
<evidence type="ECO:0000255" key="3">
    <source>
        <dbReference type="PROSITE-ProRule" id="PRU00532"/>
    </source>
</evidence>
<evidence type="ECO:0000269" key="4">
    <source>
    </source>
</evidence>
<evidence type="ECO:0000269" key="5">
    <source>
    </source>
</evidence>
<evidence type="ECO:0000269" key="6">
    <source>
    </source>
</evidence>
<evidence type="ECO:0000269" key="7">
    <source>
    </source>
</evidence>
<evidence type="ECO:0000269" key="8">
    <source>
    </source>
</evidence>
<evidence type="ECO:0000303" key="9">
    <source>
    </source>
</evidence>
<evidence type="ECO:0000303" key="10">
    <source>
    </source>
</evidence>
<evidence type="ECO:0000303" key="11">
    <source>
    </source>
</evidence>
<evidence type="ECO:0000303" key="12">
    <source>
    </source>
</evidence>
<evidence type="ECO:0000305" key="13"/>
<evidence type="ECO:0000312" key="14">
    <source>
        <dbReference type="HGNC" id="HGNC:25845"/>
    </source>
</evidence>
<evidence type="ECO:0007744" key="15">
    <source>
        <dbReference type="PDB" id="4U9V"/>
    </source>
</evidence>
<evidence type="ECO:0007744" key="16">
    <source>
        <dbReference type="PDB" id="4U9W"/>
    </source>
</evidence>
<evidence type="ECO:0007829" key="17">
    <source>
        <dbReference type="PDB" id="4U9W"/>
    </source>
</evidence>
<evidence type="ECO:0007829" key="18">
    <source>
        <dbReference type="PDB" id="7KD7"/>
    </source>
</evidence>
<evidence type="ECO:0007829" key="19">
    <source>
        <dbReference type="PDB" id="7KPU"/>
    </source>
</evidence>
<name>NAA40_HUMAN</name>
<gene>
    <name evidence="10 14" type="primary">NAA40</name>
    <name type="synonym">NAT11</name>
    <name evidence="11" type="synonym">PATT1</name>
</gene>
<comment type="function">
    <text evidence="1 5 6 8">N-alpha-acetyltransferase that specifically mediates the acetylation of the N-terminal residues of histones H4 and H2A (PubMed:21935442, PubMed:25619998). In contrast to other N-alpha-acetyltransferase, has a very specific selectivity for histones H4 and H2A N-terminus and specifically recognizes the 'Ser-Gly-Arg-Gly sequence' (PubMed:21935442, PubMed:25619998). Acts as a negative regulator of apoptosis (PubMed:26666750). May play a role in hepatic lipid metabolism (By similarity).</text>
</comment>
<comment type="catalytic activity">
    <reaction evidence="5 6">
        <text>N-terminal L-seryl-[histone H4] + acetyl-CoA = N-terminal N(alpha)-acetyl-L-seryl-[histone H4] + CoA + H(+)</text>
        <dbReference type="Rhea" id="RHEA:50596"/>
        <dbReference type="Rhea" id="RHEA-COMP:12740"/>
        <dbReference type="Rhea" id="RHEA-COMP:12743"/>
        <dbReference type="ChEBI" id="CHEBI:15378"/>
        <dbReference type="ChEBI" id="CHEBI:57287"/>
        <dbReference type="ChEBI" id="CHEBI:57288"/>
        <dbReference type="ChEBI" id="CHEBI:64738"/>
        <dbReference type="ChEBI" id="CHEBI:83690"/>
        <dbReference type="EC" id="2.3.1.257"/>
    </reaction>
</comment>
<comment type="catalytic activity">
    <reaction evidence="5 6">
        <text>N-terminal L-seryl-[histone H2A] + acetyl-CoA = N-terminal N(alpha)-acetyl-L-seryl-[histone H2A] + CoA + H(+)</text>
        <dbReference type="Rhea" id="RHEA:50600"/>
        <dbReference type="Rhea" id="RHEA-COMP:12742"/>
        <dbReference type="Rhea" id="RHEA-COMP:12744"/>
        <dbReference type="ChEBI" id="CHEBI:15378"/>
        <dbReference type="ChEBI" id="CHEBI:57287"/>
        <dbReference type="ChEBI" id="CHEBI:57288"/>
        <dbReference type="ChEBI" id="CHEBI:64738"/>
        <dbReference type="ChEBI" id="CHEBI:83690"/>
        <dbReference type="EC" id="2.3.1.257"/>
    </reaction>
</comment>
<comment type="interaction">
    <interactant intactId="EBI-16356946">
        <id>Q86UY6</id>
    </interactant>
    <interactant intactId="EBI-1054703">
        <id>P20290-2</id>
        <label>BTF3</label>
    </interactant>
    <organismsDiffer>false</organismsDiffer>
    <experiments>3</experiments>
</comment>
<comment type="interaction">
    <interactant intactId="EBI-16140302">
        <id>Q86UY6-1</id>
    </interactant>
    <interactant intactId="EBI-302023">
        <id>P62805</id>
        <label>H4C9</label>
    </interactant>
    <organismsDiffer>false</organismsDiffer>
    <experiments>3</experiments>
</comment>
<comment type="subcellular location">
    <subcellularLocation>
        <location evidence="7">Cytoplasm</location>
    </subcellularLocation>
    <subcellularLocation>
        <location evidence="7">Nucleus</location>
    </subcellularLocation>
</comment>
<comment type="alternative products">
    <event type="alternative splicing"/>
    <isoform>
        <id>Q86UY6-1</id>
        <name>1</name>
        <sequence type="displayed"/>
    </isoform>
    <isoform>
        <id>Q86UY6-3</id>
        <name>2</name>
        <sequence type="described" ref="VSP_054274"/>
    </isoform>
    <isoform>
        <id>Q86UY6-4</id>
        <name>3</name>
        <sequence type="described" ref="VSP_054273"/>
    </isoform>
</comment>
<comment type="tissue specificity">
    <text evidence="4">Widely expressed; with the highest expression level in liver and the lowest expression in brain (at protein level).</text>
</comment>
<comment type="induction">
    <text evidence="4">Down-regulated in hepatocellular carcinoma tissues.</text>
</comment>
<comment type="similarity">
    <text evidence="13">Belongs to the acetyltransferase family. NAA40 subfamily.</text>
</comment>
<comment type="sequence caution" evidence="13">
    <conflict type="miscellaneous discrepancy">
        <sequence resource="EMBL-CDS" id="CAI46006"/>
    </conflict>
    <text>Probable cloning artifact.</text>
</comment>
<sequence length="237" mass="27194">MGRKSSKAKEKKQKRLEERAAMDAVCAKVDAANRLGDPLEAFPVFKKYDRNGLNVSIECKRVSGLEPATVDWAFDLTKTNMQTMYEQSEWGWKDREKREEMTDDRAWYLIAWENSSVPVAFSHFRFDVECGDEVLYCYEVQLESKVRRKGLGKFLIQILQLMANSTQMKKVMLTVFKHNHGAYQFFREALQFEIDDSSPSMSGCCGEDCSYEILSRRTKFGDSHHSHAGGHCGGCCH</sequence>
<proteinExistence type="evidence at protein level"/>
<organism>
    <name type="scientific">Homo sapiens</name>
    <name type="common">Human</name>
    <dbReference type="NCBI Taxonomy" id="9606"/>
    <lineage>
        <taxon>Eukaryota</taxon>
        <taxon>Metazoa</taxon>
        <taxon>Chordata</taxon>
        <taxon>Craniata</taxon>
        <taxon>Vertebrata</taxon>
        <taxon>Euteleostomi</taxon>
        <taxon>Mammalia</taxon>
        <taxon>Eutheria</taxon>
        <taxon>Euarchontoglires</taxon>
        <taxon>Primates</taxon>
        <taxon>Haplorrhini</taxon>
        <taxon>Catarrhini</taxon>
        <taxon>Hominidae</taxon>
        <taxon>Homo</taxon>
    </lineage>
</organism>
<reference key="1">
    <citation type="journal article" date="2004" name="Nat. Genet.">
        <title>Complete sequencing and characterization of 21,243 full-length human cDNAs.</title>
        <authorList>
            <person name="Ota T."/>
            <person name="Suzuki Y."/>
            <person name="Nishikawa T."/>
            <person name="Otsuki T."/>
            <person name="Sugiyama T."/>
            <person name="Irie R."/>
            <person name="Wakamatsu A."/>
            <person name="Hayashi K."/>
            <person name="Sato H."/>
            <person name="Nagai K."/>
            <person name="Kimura K."/>
            <person name="Makita H."/>
            <person name="Sekine M."/>
            <person name="Obayashi M."/>
            <person name="Nishi T."/>
            <person name="Shibahara T."/>
            <person name="Tanaka T."/>
            <person name="Ishii S."/>
            <person name="Yamamoto J."/>
            <person name="Saito K."/>
            <person name="Kawai Y."/>
            <person name="Isono Y."/>
            <person name="Nakamura Y."/>
            <person name="Nagahari K."/>
            <person name="Murakami K."/>
            <person name="Yasuda T."/>
            <person name="Iwayanagi T."/>
            <person name="Wagatsuma M."/>
            <person name="Shiratori A."/>
            <person name="Sudo H."/>
            <person name="Hosoiri T."/>
            <person name="Kaku Y."/>
            <person name="Kodaira H."/>
            <person name="Kondo H."/>
            <person name="Sugawara M."/>
            <person name="Takahashi M."/>
            <person name="Kanda K."/>
            <person name="Yokoi T."/>
            <person name="Furuya T."/>
            <person name="Kikkawa E."/>
            <person name="Omura Y."/>
            <person name="Abe K."/>
            <person name="Kamihara K."/>
            <person name="Katsuta N."/>
            <person name="Sato K."/>
            <person name="Tanikawa M."/>
            <person name="Yamazaki M."/>
            <person name="Ninomiya K."/>
            <person name="Ishibashi T."/>
            <person name="Yamashita H."/>
            <person name="Murakawa K."/>
            <person name="Fujimori K."/>
            <person name="Tanai H."/>
            <person name="Kimata M."/>
            <person name="Watanabe M."/>
            <person name="Hiraoka S."/>
            <person name="Chiba Y."/>
            <person name="Ishida S."/>
            <person name="Ono Y."/>
            <person name="Takiguchi S."/>
            <person name="Watanabe S."/>
            <person name="Yosida M."/>
            <person name="Hotuta T."/>
            <person name="Kusano J."/>
            <person name="Kanehori K."/>
            <person name="Takahashi-Fujii A."/>
            <person name="Hara H."/>
            <person name="Tanase T.-O."/>
            <person name="Nomura Y."/>
            <person name="Togiya S."/>
            <person name="Komai F."/>
            <person name="Hara R."/>
            <person name="Takeuchi K."/>
            <person name="Arita M."/>
            <person name="Imose N."/>
            <person name="Musashino K."/>
            <person name="Yuuki H."/>
            <person name="Oshima A."/>
            <person name="Sasaki N."/>
            <person name="Aotsuka S."/>
            <person name="Yoshikawa Y."/>
            <person name="Matsunawa H."/>
            <person name="Ichihara T."/>
            <person name="Shiohata N."/>
            <person name="Sano S."/>
            <person name="Moriya S."/>
            <person name="Momiyama H."/>
            <person name="Satoh N."/>
            <person name="Takami S."/>
            <person name="Terashima Y."/>
            <person name="Suzuki O."/>
            <person name="Nakagawa S."/>
            <person name="Senoh A."/>
            <person name="Mizoguchi H."/>
            <person name="Goto Y."/>
            <person name="Shimizu F."/>
            <person name="Wakebe H."/>
            <person name="Hishigaki H."/>
            <person name="Watanabe T."/>
            <person name="Sugiyama A."/>
            <person name="Takemoto M."/>
            <person name="Kawakami B."/>
            <person name="Yamazaki M."/>
            <person name="Watanabe K."/>
            <person name="Kumagai A."/>
            <person name="Itakura S."/>
            <person name="Fukuzumi Y."/>
            <person name="Fujimori Y."/>
            <person name="Komiyama M."/>
            <person name="Tashiro H."/>
            <person name="Tanigami A."/>
            <person name="Fujiwara T."/>
            <person name="Ono T."/>
            <person name="Yamada K."/>
            <person name="Fujii Y."/>
            <person name="Ozaki K."/>
            <person name="Hirao M."/>
            <person name="Ohmori Y."/>
            <person name="Kawabata A."/>
            <person name="Hikiji T."/>
            <person name="Kobatake N."/>
            <person name="Inagaki H."/>
            <person name="Ikema Y."/>
            <person name="Okamoto S."/>
            <person name="Okitani R."/>
            <person name="Kawakami T."/>
            <person name="Noguchi S."/>
            <person name="Itoh T."/>
            <person name="Shigeta K."/>
            <person name="Senba T."/>
            <person name="Matsumura K."/>
            <person name="Nakajima Y."/>
            <person name="Mizuno T."/>
            <person name="Morinaga M."/>
            <person name="Sasaki M."/>
            <person name="Togashi T."/>
            <person name="Oyama M."/>
            <person name="Hata H."/>
            <person name="Watanabe M."/>
            <person name="Komatsu T."/>
            <person name="Mizushima-Sugano J."/>
            <person name="Satoh T."/>
            <person name="Shirai Y."/>
            <person name="Takahashi Y."/>
            <person name="Nakagawa K."/>
            <person name="Okumura K."/>
            <person name="Nagase T."/>
            <person name="Nomura N."/>
            <person name="Kikuchi H."/>
            <person name="Masuho Y."/>
            <person name="Yamashita R."/>
            <person name="Nakai K."/>
            <person name="Yada T."/>
            <person name="Nakamura Y."/>
            <person name="Ohara O."/>
            <person name="Isogai T."/>
            <person name="Sugano S."/>
        </authorList>
    </citation>
    <scope>NUCLEOTIDE SEQUENCE [LARGE SCALE MRNA] (ISOFORMS 1; 2 AND 3)</scope>
    <source>
        <tissue>Placenta</tissue>
        <tissue>Thyroid</tissue>
    </source>
</reference>
<reference key="2">
    <citation type="journal article" date="2007" name="BMC Genomics">
        <title>The full-ORF clone resource of the German cDNA consortium.</title>
        <authorList>
            <person name="Bechtel S."/>
            <person name="Rosenfelder H."/>
            <person name="Duda A."/>
            <person name="Schmidt C.P."/>
            <person name="Ernst U."/>
            <person name="Wellenreuther R."/>
            <person name="Mehrle A."/>
            <person name="Schuster C."/>
            <person name="Bahr A."/>
            <person name="Bloecker H."/>
            <person name="Heubner D."/>
            <person name="Hoerlein A."/>
            <person name="Michel G."/>
            <person name="Wedler H."/>
            <person name="Koehrer K."/>
            <person name="Ottenwaelder B."/>
            <person name="Poustka A."/>
            <person name="Wiemann S."/>
            <person name="Schupp I."/>
        </authorList>
    </citation>
    <scope>NUCLEOTIDE SEQUENCE [LARGE SCALE MRNA] (ISOFORM 1)</scope>
    <source>
        <tissue>Retina</tissue>
    </source>
</reference>
<reference key="3">
    <citation type="journal article" date="2006" name="Nature">
        <title>Human chromosome 11 DNA sequence and analysis including novel gene identification.</title>
        <authorList>
            <person name="Taylor T.D."/>
            <person name="Noguchi H."/>
            <person name="Totoki Y."/>
            <person name="Toyoda A."/>
            <person name="Kuroki Y."/>
            <person name="Dewar K."/>
            <person name="Lloyd C."/>
            <person name="Itoh T."/>
            <person name="Takeda T."/>
            <person name="Kim D.-W."/>
            <person name="She X."/>
            <person name="Barlow K.F."/>
            <person name="Bloom T."/>
            <person name="Bruford E."/>
            <person name="Chang J.L."/>
            <person name="Cuomo C.A."/>
            <person name="Eichler E."/>
            <person name="FitzGerald M.G."/>
            <person name="Jaffe D.B."/>
            <person name="LaButti K."/>
            <person name="Nicol R."/>
            <person name="Park H.-S."/>
            <person name="Seaman C."/>
            <person name="Sougnez C."/>
            <person name="Yang X."/>
            <person name="Zimmer A.R."/>
            <person name="Zody M.C."/>
            <person name="Birren B.W."/>
            <person name="Nusbaum C."/>
            <person name="Fujiyama A."/>
            <person name="Hattori M."/>
            <person name="Rogers J."/>
            <person name="Lander E.S."/>
            <person name="Sakaki Y."/>
        </authorList>
    </citation>
    <scope>NUCLEOTIDE SEQUENCE [LARGE SCALE GENOMIC DNA]</scope>
</reference>
<reference key="4">
    <citation type="journal article" date="2004" name="Genome Res.">
        <title>The status, quality, and expansion of the NIH full-length cDNA project: the Mammalian Gene Collection (MGC).</title>
        <authorList>
            <consortium name="The MGC Project Team"/>
        </authorList>
    </citation>
    <scope>NUCLEOTIDE SEQUENCE [LARGE SCALE MRNA] (ISOFORM 1)</scope>
    <source>
        <tissue>Lymph</tissue>
    </source>
</reference>
<reference key="5">
    <citation type="journal article" date="2009" name="BMC Proc.">
        <title>A synopsis of eukaryotic Nalpha-terminal acetyltransferases: nomenclature, subunits and substrates.</title>
        <authorList>
            <person name="Polevoda B."/>
            <person name="Arnesen T."/>
            <person name="Sherman F."/>
        </authorList>
    </citation>
    <scope>NOMENCLATURE</scope>
</reference>
<reference key="6">
    <citation type="journal article" date="2009" name="Int. J. Biochem. Cell Biol.">
        <title>Patt1, a novel protein acetyltransferase that is highly expressed in liver and downregulated in hepatocellular carcinoma, enhances apoptosis of hepatoma cells.</title>
        <authorList>
            <person name="Liu Z."/>
            <person name="Liu Y."/>
            <person name="Wang H."/>
            <person name="Ge X."/>
            <person name="Jin Q."/>
            <person name="Ding G."/>
            <person name="Hu Y."/>
            <person name="Zhou B."/>
            <person name="Chen Z."/>
            <person name="Ge X."/>
            <person name="Zhang B."/>
            <person name="Man X."/>
            <person name="Zhai Q."/>
        </authorList>
    </citation>
    <scope>MUTAGENESIS OF TYR-136 AND GLU-139</scope>
    <scope>TISSUE SPECIFICITY</scope>
    <scope>INDUCTION</scope>
</reference>
<reference key="7">
    <citation type="journal article" date="2011" name="PLoS ONE">
        <title>The human N-alpha-acetyltransferase 40 (hNaa40p/hNatD) is conserved from yeast and N-terminally acetylates histones H2A and H4.</title>
        <authorList>
            <person name="Hole K."/>
            <person name="Van Damme P."/>
            <person name="Dalva M."/>
            <person name="Aksnes H."/>
            <person name="Glomnes N."/>
            <person name="Varhaug J.E."/>
            <person name="Lillehaug J.R."/>
            <person name="Gevaert K."/>
            <person name="Arnesen T."/>
        </authorList>
    </citation>
    <scope>FUNCTION</scope>
    <scope>CATALYTIC ACTIVITY</scope>
</reference>
<reference key="8">
    <citation type="journal article" date="2016" name="Apoptosis">
        <title>Depletion of histone N-terminal-acetyltransferase Naa40 induces p53-independent apoptosis in colorectal cancer cells via the mitochondrial pathway.</title>
        <authorList>
            <person name="Pavlou D."/>
            <person name="Kirmizis A."/>
        </authorList>
    </citation>
    <scope>FUNCTION</scope>
</reference>
<reference key="9">
    <citation type="journal article" date="2015" name="Cell Rep.">
        <title>An organellar nalpha-acetyltransferase, naa60, acetylates cytosolic N termini of transmembrane proteins and maintains Golgi integrity.</title>
        <authorList>
            <person name="Aksnes H."/>
            <person name="Van Damme P."/>
            <person name="Goris M."/>
            <person name="Starheim K.K."/>
            <person name="Marie M."/>
            <person name="Stoeve S.I."/>
            <person name="Hoel C."/>
            <person name="Kalvik T.V."/>
            <person name="Hole K."/>
            <person name="Glomnes N."/>
            <person name="Furnes C."/>
            <person name="Ljostveit S."/>
            <person name="Ziegler M."/>
            <person name="Niere M."/>
            <person name="Gevaert K."/>
            <person name="Arnesen T."/>
        </authorList>
    </citation>
    <scope>SUBCELLULAR LOCATION</scope>
</reference>
<reference key="10">
    <citation type="journal article" date="2013" name="J. Mol. Model.">
        <title>Structure of Patt1 human proapoptotic histone acetyltransferase.</title>
        <authorList>
            <person name="Jedrzejewski R.P."/>
            <person name="Kazmierkiewicz R."/>
        </authorList>
    </citation>
    <scope>3D-STRUCTURE MODELING</scope>
</reference>
<reference key="11">
    <citation type="journal article" date="2015" name="Structure">
        <title>The molecular basis for histone H4- and H2A-specific amino-terminal acetylation by NatD.</title>
        <authorList>
            <person name="Magin R.S."/>
            <person name="Liszczak G.P."/>
            <person name="Marmorstein R."/>
        </authorList>
    </citation>
    <scope>X-RAY CRYSTALLOGRAPHY (1.78 ANGSTROMS) OF 25-220 IN COMPLEX WITH ACETYL-COA AND SUBSTRATE</scope>
    <scope>FUNCTION</scope>
    <scope>CATALYTIC ACTIVITY</scope>
    <scope>MUTAGENESIS OF TYR-85; TRP-90; GLU-100; 127-ASP--GLU-129; TYR-136; CYS-137; TYR-138; GLU-139; THR-174 AND TYR-211</scope>
</reference>
<feature type="initiator methionine" description="Removed" evidence="2">
    <location>
        <position position="1"/>
    </location>
</feature>
<feature type="chain" id="PRO_0000284897" description="N-alpha-acetyltransferase 40">
    <location>
        <begin position="2"/>
        <end position="237"/>
    </location>
</feature>
<feature type="domain" description="N-acetyltransferase" evidence="3">
    <location>
        <begin position="63"/>
        <end position="216"/>
    </location>
</feature>
<feature type="binding site" evidence="6 16">
    <location>
        <position position="85"/>
    </location>
    <ligand>
        <name>substrate</name>
    </ligand>
</feature>
<feature type="binding site" evidence="6 16">
    <location>
        <begin position="127"/>
        <end position="129"/>
    </location>
    <ligand>
        <name>substrate</name>
    </ligand>
</feature>
<feature type="binding site" evidence="6 16">
    <location>
        <position position="138"/>
    </location>
    <ligand>
        <name>substrate</name>
    </ligand>
</feature>
<feature type="binding site" evidence="6 15 16">
    <location>
        <begin position="140"/>
        <end position="142"/>
    </location>
    <ligand>
        <name>acetyl-CoA</name>
        <dbReference type="ChEBI" id="CHEBI:57288"/>
    </ligand>
</feature>
<feature type="binding site" evidence="6 15 16">
    <location>
        <begin position="148"/>
        <end position="153"/>
    </location>
    <ligand>
        <name>acetyl-CoA</name>
        <dbReference type="ChEBI" id="CHEBI:57288"/>
    </ligand>
</feature>
<feature type="binding site" evidence="6 16">
    <location>
        <position position="174"/>
    </location>
    <ligand>
        <name>substrate</name>
    </ligand>
</feature>
<feature type="binding site" evidence="6 15 16">
    <location>
        <position position="179"/>
    </location>
    <ligand>
        <name>acetyl-CoA</name>
        <dbReference type="ChEBI" id="CHEBI:57288"/>
    </ligand>
</feature>
<feature type="binding site" evidence="6 16">
    <location>
        <position position="197"/>
    </location>
    <ligand>
        <name>substrate</name>
    </ligand>
</feature>
<feature type="binding site" evidence="6 16">
    <location>
        <position position="211"/>
    </location>
    <ligand>
        <name>substrate</name>
    </ligand>
</feature>
<feature type="site" description="Essential for catalytic activity" evidence="6">
    <location>
        <position position="139"/>
    </location>
</feature>
<feature type="lipid moiety-binding region" description="N-myristoyl glycine" evidence="2">
    <location>
        <position position="2"/>
    </location>
</feature>
<feature type="splice variant" id="VSP_054273" description="In isoform 3." evidence="9">
    <original>MGRKSSKAKEKKQKRLEERAAMDAVCAKVDAANRLGDPLEAFPVFKKYDRN</original>
    <variation>MPFVPKWTLPT</variation>
    <location>
        <begin position="1"/>
        <end position="51"/>
    </location>
</feature>
<feature type="splice variant" id="VSP_054274" description="In isoform 2." evidence="9">
    <location>
        <begin position="1"/>
        <end position="21"/>
    </location>
</feature>
<feature type="mutagenesis site" description="Strongly reduced N-alpha-acetyltransferase activity." evidence="6">
    <original>Y</original>
    <variation>A</variation>
    <location>
        <position position="85"/>
    </location>
</feature>
<feature type="mutagenesis site" description="Strongly reduced N-alpha-acetyltransferase activity." evidence="6">
    <original>W</original>
    <variation>A</variation>
    <location>
        <position position="90"/>
    </location>
</feature>
<feature type="mutagenesis site" description="5 times reduced N-alpha-acetyltransferase activity." evidence="6">
    <original>E</original>
    <variation>A</variation>
    <location>
        <position position="100"/>
    </location>
</feature>
<feature type="mutagenesis site" description="Strongly reduced N-alpha-acetyltransferase activity." evidence="6">
    <original>DVE</original>
    <variation>AVA</variation>
    <location>
        <begin position="127"/>
        <end position="129"/>
    </location>
</feature>
<feature type="mutagenesis site" description="Strongly reduced N-alpha-acetyltransferase activity." evidence="6">
    <original>Y</original>
    <variation>A</variation>
    <location>
        <position position="136"/>
    </location>
</feature>
<feature type="mutagenesis site" description="Slightly reduced N-alpha-acetyltransferase activity." evidence="4 6">
    <original>Y</original>
    <variation>F</variation>
    <location>
        <position position="136"/>
    </location>
</feature>
<feature type="mutagenesis site" description="Reduced N-alpha-acetyltransferase activity." evidence="6">
    <original>C</original>
    <variation>A</variation>
    <location>
        <position position="137"/>
    </location>
</feature>
<feature type="mutagenesis site" description="Strongly reduced N-alpha-acetyltransferase activity." evidence="6">
    <original>Y</original>
    <variation>A</variation>
    <location>
        <position position="138"/>
    </location>
</feature>
<feature type="mutagenesis site" description="Abolished N-alpha-acetyltransferase activity." evidence="4 6">
    <original>E</original>
    <variation>Q</variation>
    <location>
        <position position="139"/>
    </location>
</feature>
<feature type="mutagenesis site" description="Does not affect N-alpha-acetyltransferase activity." evidence="6">
    <original>T</original>
    <variation>A</variation>
    <location>
        <position position="174"/>
    </location>
</feature>
<feature type="mutagenesis site" description="Does not affect N-alpha-acetyltransferase activity." evidence="6">
    <original>Y</original>
    <variation>A</variation>
    <location>
        <position position="211"/>
    </location>
</feature>
<feature type="sequence conflict" description="In Ref. 1; BAB14720." evidence="13" ref="1">
    <original>G</original>
    <variation>S</variation>
    <location>
        <position position="233"/>
    </location>
</feature>
<feature type="helix" evidence="19">
    <location>
        <begin position="19"/>
        <end position="33"/>
    </location>
</feature>
<feature type="turn" evidence="19">
    <location>
        <begin position="38"/>
        <end position="41"/>
    </location>
</feature>
<feature type="helix" evidence="19">
    <location>
        <begin position="43"/>
        <end position="46"/>
    </location>
</feature>
<feature type="strand" evidence="17">
    <location>
        <begin position="47"/>
        <end position="50"/>
    </location>
</feature>
<feature type="strand" evidence="19">
    <location>
        <begin position="55"/>
        <end position="61"/>
    </location>
</feature>
<feature type="helix" evidence="19">
    <location>
        <begin position="62"/>
        <end position="64"/>
    </location>
</feature>
<feature type="helix" evidence="19">
    <location>
        <begin position="67"/>
        <end position="87"/>
    </location>
</feature>
<feature type="strand" evidence="19">
    <location>
        <begin position="88"/>
        <end position="90"/>
    </location>
</feature>
<feature type="helix" evidence="19">
    <location>
        <begin position="94"/>
        <end position="102"/>
    </location>
</feature>
<feature type="strand" evidence="19">
    <location>
        <begin position="107"/>
        <end position="113"/>
    </location>
</feature>
<feature type="turn" evidence="19">
    <location>
        <begin position="114"/>
        <end position="116"/>
    </location>
</feature>
<feature type="strand" evidence="19">
    <location>
        <begin position="117"/>
        <end position="129"/>
    </location>
</feature>
<feature type="strand" evidence="19">
    <location>
        <begin position="132"/>
        <end position="142"/>
    </location>
</feature>
<feature type="helix" evidence="19">
    <location>
        <begin position="144"/>
        <end position="146"/>
    </location>
</feature>
<feature type="strand" evidence="18">
    <location>
        <begin position="148"/>
        <end position="150"/>
    </location>
</feature>
<feature type="helix" evidence="19">
    <location>
        <begin position="151"/>
        <end position="165"/>
    </location>
</feature>
<feature type="strand" evidence="19">
    <location>
        <begin position="169"/>
        <end position="176"/>
    </location>
</feature>
<feature type="helix" evidence="19">
    <location>
        <begin position="180"/>
        <end position="187"/>
    </location>
</feature>
<feature type="helix" evidence="19">
    <location>
        <begin position="199"/>
        <end position="201"/>
    </location>
</feature>
<feature type="strand" evidence="19">
    <location>
        <begin position="211"/>
        <end position="217"/>
    </location>
</feature>
<protein>
    <recommendedName>
        <fullName evidence="10 14">N-alpha-acetyltransferase 40</fullName>
        <ecNumber evidence="5 6">2.3.1.257</ecNumber>
    </recommendedName>
    <alternativeName>
        <fullName>N-acetyltransferase 11</fullName>
    </alternativeName>
    <alternativeName>
        <fullName evidence="12">N-alpha-acetyltransferase D</fullName>
        <shortName evidence="12">NatD</shortName>
        <shortName evidence="12">hNatD</shortName>
    </alternativeName>
    <alternativeName>
        <fullName evidence="11">Protein acetyltransferase 1</fullName>
    </alternativeName>
</protein>
<accession>Q86UY6</accession>
<accession>B4DR03</accession>
<accession>B4DU10</accession>
<accession>Q5HYL5</accession>
<accession>Q9H897</accession>
<keyword id="KW-0002">3D-structure</keyword>
<keyword id="KW-0012">Acyltransferase</keyword>
<keyword id="KW-0025">Alternative splicing</keyword>
<keyword id="KW-0963">Cytoplasm</keyword>
<keyword id="KW-0449">Lipoprotein</keyword>
<keyword id="KW-0519">Myristate</keyword>
<keyword id="KW-0539">Nucleus</keyword>
<keyword id="KW-1267">Proteomics identification</keyword>
<keyword id="KW-1185">Reference proteome</keyword>
<keyword id="KW-0808">Transferase</keyword>